<comment type="function">
    <text evidence="1">Catalyzes the conversion of S-adenosyl-L-methionine (SAM) to carboxy-S-adenosyl-L-methionine (Cx-SAM).</text>
</comment>
<comment type="catalytic activity">
    <reaction evidence="1">
        <text>prephenate + S-adenosyl-L-methionine = carboxy-S-adenosyl-L-methionine + 3-phenylpyruvate + H2O</text>
        <dbReference type="Rhea" id="RHEA:51692"/>
        <dbReference type="ChEBI" id="CHEBI:15377"/>
        <dbReference type="ChEBI" id="CHEBI:18005"/>
        <dbReference type="ChEBI" id="CHEBI:29934"/>
        <dbReference type="ChEBI" id="CHEBI:59789"/>
        <dbReference type="ChEBI" id="CHEBI:134278"/>
    </reaction>
</comment>
<comment type="subunit">
    <text evidence="1">Homodimer.</text>
</comment>
<comment type="similarity">
    <text evidence="1">Belongs to the class I-like SAM-binding methyltransferase superfamily. Cx-SAM synthase family.</text>
</comment>
<sequence>MNTSQDTIYAQPNEHISDFQFDNRVAGVFSDMIRRSVPGYTQIINTIGDFADRFVMPNTQIYDLGCSLGAATLSIRRQIQGRQCRIIAVDNSESMVARCQENLNAYVSDTDVDLVCGDIRDIDIQNASLVVLNFTLQFLPPEDRETLIAKIYQGLNPGGMLVLSEKIRFDDAPIQTLLEEQHLDFKRANGYSELEISQKRSALENVMKPDTLTTHQQRLTRQGFSHFSLWFQCFNFASMVAIK</sequence>
<reference key="1">
    <citation type="submission" date="2006-12" db="EMBL/GenBank/DDBJ databases">
        <title>Complete sequence of Shewanella sp. W3-18-1.</title>
        <authorList>
            <consortium name="US DOE Joint Genome Institute"/>
            <person name="Copeland A."/>
            <person name="Lucas S."/>
            <person name="Lapidus A."/>
            <person name="Barry K."/>
            <person name="Detter J.C."/>
            <person name="Glavina del Rio T."/>
            <person name="Hammon N."/>
            <person name="Israni S."/>
            <person name="Dalin E."/>
            <person name="Tice H."/>
            <person name="Pitluck S."/>
            <person name="Chain P."/>
            <person name="Malfatti S."/>
            <person name="Shin M."/>
            <person name="Vergez L."/>
            <person name="Schmutz J."/>
            <person name="Larimer F."/>
            <person name="Land M."/>
            <person name="Hauser L."/>
            <person name="Kyrpides N."/>
            <person name="Lykidis A."/>
            <person name="Tiedje J."/>
            <person name="Richardson P."/>
        </authorList>
    </citation>
    <scope>NUCLEOTIDE SEQUENCE [LARGE SCALE GENOMIC DNA]</scope>
    <source>
        <strain>W3-18-1</strain>
    </source>
</reference>
<name>CMOA_SHESW</name>
<dbReference type="EC" id="2.1.3.-" evidence="1"/>
<dbReference type="EMBL" id="CP000503">
    <property type="protein sequence ID" value="ABM24903.1"/>
    <property type="molecule type" value="Genomic_DNA"/>
</dbReference>
<dbReference type="RefSeq" id="WP_011789374.1">
    <property type="nucleotide sequence ID" value="NC_008750.1"/>
</dbReference>
<dbReference type="SMR" id="A1RJQ8"/>
<dbReference type="KEGG" id="shw:Sputw3181_2075"/>
<dbReference type="HOGENOM" id="CLU_078475_0_0_6"/>
<dbReference type="Proteomes" id="UP000002597">
    <property type="component" value="Chromosome"/>
</dbReference>
<dbReference type="GO" id="GO:0016743">
    <property type="term" value="F:carboxyl- or carbamoyltransferase activity"/>
    <property type="evidence" value="ECO:0007669"/>
    <property type="project" value="UniProtKB-UniRule"/>
</dbReference>
<dbReference type="GO" id="GO:1904047">
    <property type="term" value="F:S-adenosyl-L-methionine binding"/>
    <property type="evidence" value="ECO:0007669"/>
    <property type="project" value="UniProtKB-UniRule"/>
</dbReference>
<dbReference type="GO" id="GO:0002098">
    <property type="term" value="P:tRNA wobble uridine modification"/>
    <property type="evidence" value="ECO:0007669"/>
    <property type="project" value="InterPro"/>
</dbReference>
<dbReference type="CDD" id="cd02440">
    <property type="entry name" value="AdoMet_MTases"/>
    <property type="match status" value="1"/>
</dbReference>
<dbReference type="Gene3D" id="3.40.50.150">
    <property type="entry name" value="Vaccinia Virus protein VP39"/>
    <property type="match status" value="1"/>
</dbReference>
<dbReference type="HAMAP" id="MF_01589">
    <property type="entry name" value="Cx_SAM_synthase"/>
    <property type="match status" value="1"/>
</dbReference>
<dbReference type="InterPro" id="IPR005271">
    <property type="entry name" value="CmoA"/>
</dbReference>
<dbReference type="InterPro" id="IPR041698">
    <property type="entry name" value="Methyltransf_25"/>
</dbReference>
<dbReference type="InterPro" id="IPR029063">
    <property type="entry name" value="SAM-dependent_MTases_sf"/>
</dbReference>
<dbReference type="NCBIfam" id="TIGR00740">
    <property type="entry name" value="carboxy-S-adenosyl-L-methionine synthase CmoA"/>
    <property type="match status" value="1"/>
</dbReference>
<dbReference type="NCBIfam" id="NF011995">
    <property type="entry name" value="PRK15451.1"/>
    <property type="match status" value="1"/>
</dbReference>
<dbReference type="PANTHER" id="PTHR43861:SF2">
    <property type="entry name" value="CARBOXY-S-ADENOSYL-L-METHIONINE SYNTHASE"/>
    <property type="match status" value="1"/>
</dbReference>
<dbReference type="PANTHER" id="PTHR43861">
    <property type="entry name" value="TRANS-ACONITATE 2-METHYLTRANSFERASE-RELATED"/>
    <property type="match status" value="1"/>
</dbReference>
<dbReference type="Pfam" id="PF13649">
    <property type="entry name" value="Methyltransf_25"/>
    <property type="match status" value="1"/>
</dbReference>
<dbReference type="PIRSF" id="PIRSF006325">
    <property type="entry name" value="MeTrfase_bac"/>
    <property type="match status" value="1"/>
</dbReference>
<dbReference type="SUPFAM" id="SSF53335">
    <property type="entry name" value="S-adenosyl-L-methionine-dependent methyltransferases"/>
    <property type="match status" value="1"/>
</dbReference>
<accession>A1RJQ8</accession>
<gene>
    <name evidence="1" type="primary">cmoA</name>
    <name type="ordered locus">Sputw3181_2075</name>
</gene>
<keyword id="KW-0949">S-adenosyl-L-methionine</keyword>
<keyword id="KW-0808">Transferase</keyword>
<proteinExistence type="inferred from homology"/>
<evidence type="ECO:0000255" key="1">
    <source>
        <dbReference type="HAMAP-Rule" id="MF_01589"/>
    </source>
</evidence>
<protein>
    <recommendedName>
        <fullName evidence="1">Carboxy-S-adenosyl-L-methionine synthase</fullName>
        <shortName evidence="1">Cx-SAM synthase</shortName>
        <ecNumber evidence="1">2.1.3.-</ecNumber>
    </recommendedName>
</protein>
<organism>
    <name type="scientific">Shewanella sp. (strain W3-18-1)</name>
    <dbReference type="NCBI Taxonomy" id="351745"/>
    <lineage>
        <taxon>Bacteria</taxon>
        <taxon>Pseudomonadati</taxon>
        <taxon>Pseudomonadota</taxon>
        <taxon>Gammaproteobacteria</taxon>
        <taxon>Alteromonadales</taxon>
        <taxon>Shewanellaceae</taxon>
        <taxon>Shewanella</taxon>
    </lineage>
</organism>
<feature type="chain" id="PRO_0000314386" description="Carboxy-S-adenosyl-L-methionine synthase">
    <location>
        <begin position="1"/>
        <end position="243"/>
    </location>
</feature>
<feature type="binding site" evidence="1">
    <location>
        <position position="40"/>
    </location>
    <ligand>
        <name>S-adenosyl-L-methionine</name>
        <dbReference type="ChEBI" id="CHEBI:59789"/>
    </ligand>
</feature>
<feature type="binding site" evidence="1">
    <location>
        <begin position="65"/>
        <end position="67"/>
    </location>
    <ligand>
        <name>S-adenosyl-L-methionine</name>
        <dbReference type="ChEBI" id="CHEBI:59789"/>
    </ligand>
</feature>
<feature type="binding site" evidence="1">
    <location>
        <begin position="90"/>
        <end position="91"/>
    </location>
    <ligand>
        <name>S-adenosyl-L-methionine</name>
        <dbReference type="ChEBI" id="CHEBI:59789"/>
    </ligand>
</feature>
<feature type="binding site" evidence="1">
    <location>
        <begin position="118"/>
        <end position="119"/>
    </location>
    <ligand>
        <name>S-adenosyl-L-methionine</name>
        <dbReference type="ChEBI" id="CHEBI:59789"/>
    </ligand>
</feature>
<feature type="binding site" evidence="1">
    <location>
        <position position="133"/>
    </location>
    <ligand>
        <name>S-adenosyl-L-methionine</name>
        <dbReference type="ChEBI" id="CHEBI:59789"/>
    </ligand>
</feature>
<feature type="binding site" evidence="1">
    <location>
        <position position="200"/>
    </location>
    <ligand>
        <name>S-adenosyl-L-methionine</name>
        <dbReference type="ChEBI" id="CHEBI:59789"/>
    </ligand>
</feature>